<keyword id="KW-0169">Cobalamin biosynthesis</keyword>
<keyword id="KW-0456">Lyase</keyword>
<keyword id="KW-0489">Methyltransferase</keyword>
<keyword id="KW-0511">Multifunctional enzyme</keyword>
<keyword id="KW-0520">NAD</keyword>
<keyword id="KW-0560">Oxidoreductase</keyword>
<keyword id="KW-0597">Phosphoprotein</keyword>
<keyword id="KW-0627">Porphyrin biosynthesis</keyword>
<keyword id="KW-0949">S-adenosyl-L-methionine</keyword>
<keyword id="KW-0808">Transferase</keyword>
<organism>
    <name type="scientific">Klebsiella pneumoniae subsp. pneumoniae (strain ATCC 700721 / MGH 78578)</name>
    <dbReference type="NCBI Taxonomy" id="272620"/>
    <lineage>
        <taxon>Bacteria</taxon>
        <taxon>Pseudomonadati</taxon>
        <taxon>Pseudomonadota</taxon>
        <taxon>Gammaproteobacteria</taxon>
        <taxon>Enterobacterales</taxon>
        <taxon>Enterobacteriaceae</taxon>
        <taxon>Klebsiella/Raoultella group</taxon>
        <taxon>Klebsiella</taxon>
        <taxon>Klebsiella pneumoniae complex</taxon>
    </lineage>
</organism>
<feature type="chain" id="PRO_0000330519" description="Siroheme synthase 2">
    <location>
        <begin position="1"/>
        <end position="457"/>
    </location>
</feature>
<feature type="region of interest" description="Precorrin-2 dehydrogenase /sirohydrochlorin ferrochelatase" evidence="1">
    <location>
        <begin position="1"/>
        <end position="204"/>
    </location>
</feature>
<feature type="region of interest" description="Uroporphyrinogen-III C-methyltransferase" evidence="1">
    <location>
        <begin position="216"/>
        <end position="457"/>
    </location>
</feature>
<feature type="active site" description="Proton acceptor" evidence="1">
    <location>
        <position position="248"/>
    </location>
</feature>
<feature type="active site" description="Proton donor" evidence="1">
    <location>
        <position position="270"/>
    </location>
</feature>
<feature type="binding site" evidence="1">
    <location>
        <begin position="22"/>
        <end position="23"/>
    </location>
    <ligand>
        <name>NAD(+)</name>
        <dbReference type="ChEBI" id="CHEBI:57540"/>
    </ligand>
</feature>
<feature type="binding site" evidence="1">
    <location>
        <begin position="43"/>
        <end position="44"/>
    </location>
    <ligand>
        <name>NAD(+)</name>
        <dbReference type="ChEBI" id="CHEBI:57540"/>
    </ligand>
</feature>
<feature type="binding site" evidence="1">
    <location>
        <position position="225"/>
    </location>
    <ligand>
        <name>S-adenosyl-L-methionine</name>
        <dbReference type="ChEBI" id="CHEBI:59789"/>
    </ligand>
</feature>
<feature type="binding site" evidence="1">
    <location>
        <begin position="301"/>
        <end position="303"/>
    </location>
    <ligand>
        <name>S-adenosyl-L-methionine</name>
        <dbReference type="ChEBI" id="CHEBI:59789"/>
    </ligand>
</feature>
<feature type="binding site" evidence="1">
    <location>
        <position position="306"/>
    </location>
    <ligand>
        <name>S-adenosyl-L-methionine</name>
        <dbReference type="ChEBI" id="CHEBI:59789"/>
    </ligand>
</feature>
<feature type="binding site" evidence="1">
    <location>
        <begin position="331"/>
        <end position="332"/>
    </location>
    <ligand>
        <name>S-adenosyl-L-methionine</name>
        <dbReference type="ChEBI" id="CHEBI:59789"/>
    </ligand>
</feature>
<feature type="binding site" evidence="1">
    <location>
        <position position="382"/>
    </location>
    <ligand>
        <name>S-adenosyl-L-methionine</name>
        <dbReference type="ChEBI" id="CHEBI:59789"/>
    </ligand>
</feature>
<feature type="binding site" evidence="1">
    <location>
        <position position="411"/>
    </location>
    <ligand>
        <name>S-adenosyl-L-methionine</name>
        <dbReference type="ChEBI" id="CHEBI:59789"/>
    </ligand>
</feature>
<feature type="modified residue" description="Phosphoserine" evidence="1">
    <location>
        <position position="128"/>
    </location>
</feature>
<comment type="function">
    <text evidence="1">Multifunctional enzyme that catalyzes the SAM-dependent methylations of uroporphyrinogen III at position C-2 and C-7 to form precorrin-2 via precorrin-1. Then it catalyzes the NAD-dependent ring dehydrogenation of precorrin-2 to yield sirohydrochlorin. Finally, it catalyzes the ferrochelation of sirohydrochlorin to yield siroheme.</text>
</comment>
<comment type="catalytic activity">
    <reaction evidence="1">
        <text>uroporphyrinogen III + 2 S-adenosyl-L-methionine = precorrin-2 + 2 S-adenosyl-L-homocysteine + H(+)</text>
        <dbReference type="Rhea" id="RHEA:32459"/>
        <dbReference type="ChEBI" id="CHEBI:15378"/>
        <dbReference type="ChEBI" id="CHEBI:57308"/>
        <dbReference type="ChEBI" id="CHEBI:57856"/>
        <dbReference type="ChEBI" id="CHEBI:58827"/>
        <dbReference type="ChEBI" id="CHEBI:59789"/>
        <dbReference type="EC" id="2.1.1.107"/>
    </reaction>
</comment>
<comment type="catalytic activity">
    <reaction evidence="1">
        <text>precorrin-2 + NAD(+) = sirohydrochlorin + NADH + 2 H(+)</text>
        <dbReference type="Rhea" id="RHEA:15613"/>
        <dbReference type="ChEBI" id="CHEBI:15378"/>
        <dbReference type="ChEBI" id="CHEBI:57540"/>
        <dbReference type="ChEBI" id="CHEBI:57945"/>
        <dbReference type="ChEBI" id="CHEBI:58351"/>
        <dbReference type="ChEBI" id="CHEBI:58827"/>
        <dbReference type="EC" id="1.3.1.76"/>
    </reaction>
</comment>
<comment type="catalytic activity">
    <reaction evidence="1">
        <text>siroheme + 2 H(+) = sirohydrochlorin + Fe(2+)</text>
        <dbReference type="Rhea" id="RHEA:24360"/>
        <dbReference type="ChEBI" id="CHEBI:15378"/>
        <dbReference type="ChEBI" id="CHEBI:29033"/>
        <dbReference type="ChEBI" id="CHEBI:58351"/>
        <dbReference type="ChEBI" id="CHEBI:60052"/>
        <dbReference type="EC" id="4.99.1.4"/>
    </reaction>
</comment>
<comment type="pathway">
    <text evidence="1">Cofactor biosynthesis; adenosylcobalamin biosynthesis; precorrin-2 from uroporphyrinogen III: step 1/1.</text>
</comment>
<comment type="pathway">
    <text evidence="1">Cofactor biosynthesis; adenosylcobalamin biosynthesis; sirohydrochlorin from precorrin-2: step 1/1.</text>
</comment>
<comment type="pathway">
    <text evidence="1">Porphyrin-containing compound metabolism; siroheme biosynthesis; precorrin-2 from uroporphyrinogen III: step 1/1.</text>
</comment>
<comment type="pathway">
    <text evidence="1">Porphyrin-containing compound metabolism; siroheme biosynthesis; siroheme from sirohydrochlorin: step 1/1.</text>
</comment>
<comment type="pathway">
    <text evidence="1">Porphyrin-containing compound metabolism; siroheme biosynthesis; sirohydrochlorin from precorrin-2: step 1/1.</text>
</comment>
<comment type="similarity">
    <text evidence="1">In the N-terminal section; belongs to the precorrin-2 dehydrogenase / sirohydrochlorin ferrochelatase family.</text>
</comment>
<comment type="similarity">
    <text evidence="1">In the C-terminal section; belongs to the precorrin methyltransferase family.</text>
</comment>
<comment type="sequence caution" evidence="2">
    <conflict type="erroneous initiation">
        <sequence resource="EMBL-CDS" id="ABR79141"/>
    </conflict>
    <text>Truncated N-terminus.</text>
</comment>
<reference key="1">
    <citation type="submission" date="2006-09" db="EMBL/GenBank/DDBJ databases">
        <authorList>
            <consortium name="The Klebsiella pneumonia Genome Sequencing Project"/>
            <person name="McClelland M."/>
            <person name="Sanderson E.K."/>
            <person name="Spieth J."/>
            <person name="Clifton W.S."/>
            <person name="Latreille P."/>
            <person name="Sabo A."/>
            <person name="Pepin K."/>
            <person name="Bhonagiri V."/>
            <person name="Porwollik S."/>
            <person name="Ali J."/>
            <person name="Wilson R.K."/>
        </authorList>
    </citation>
    <scope>NUCLEOTIDE SEQUENCE [LARGE SCALE GENOMIC DNA]</scope>
    <source>
        <strain>ATCC 700721 / MGH 78578</strain>
    </source>
</reference>
<evidence type="ECO:0000255" key="1">
    <source>
        <dbReference type="HAMAP-Rule" id="MF_01646"/>
    </source>
</evidence>
<evidence type="ECO:0000305" key="2"/>
<protein>
    <recommendedName>
        <fullName evidence="1">Siroheme synthase 2</fullName>
    </recommendedName>
    <domain>
        <recommendedName>
            <fullName evidence="1">Uroporphyrinogen-III C-methyltransferase 2</fullName>
            <shortName evidence="1">Urogen III methylase 2</shortName>
            <ecNumber evidence="1">2.1.1.107</ecNumber>
        </recommendedName>
        <alternativeName>
            <fullName evidence="1">SUMT 2</fullName>
        </alternativeName>
        <alternativeName>
            <fullName evidence="1">Uroporphyrinogen III methylase 2</fullName>
            <shortName evidence="1">UROM 2</shortName>
        </alternativeName>
    </domain>
    <domain>
        <recommendedName>
            <fullName evidence="1">Precorrin-2 dehydrogenase 2</fullName>
            <ecNumber evidence="1">1.3.1.76</ecNumber>
        </recommendedName>
    </domain>
    <domain>
        <recommendedName>
            <fullName evidence="1">Sirohydrochlorin ferrochelatase 2</fullName>
            <ecNumber evidence="1">4.99.1.4</ecNumber>
        </recommendedName>
    </domain>
</protein>
<dbReference type="EC" id="2.1.1.107" evidence="1"/>
<dbReference type="EC" id="1.3.1.76" evidence="1"/>
<dbReference type="EC" id="4.99.1.4" evidence="1"/>
<dbReference type="EMBL" id="CP000647">
    <property type="protein sequence ID" value="ABR79141.1"/>
    <property type="status" value="ALT_INIT"/>
    <property type="molecule type" value="Genomic_DNA"/>
</dbReference>
<dbReference type="SMR" id="A6TF07"/>
<dbReference type="STRING" id="272620.KPN_03754"/>
<dbReference type="PaxDb" id="272620-KPN_03754"/>
<dbReference type="EnsemblBacteria" id="ABR79141">
    <property type="protein sequence ID" value="ABR79141"/>
    <property type="gene ID" value="KPN_03754"/>
</dbReference>
<dbReference type="KEGG" id="kpn:KPN_03754"/>
<dbReference type="HOGENOM" id="CLU_011276_2_0_6"/>
<dbReference type="UniPathway" id="UPA00148">
    <property type="reaction ID" value="UER00211"/>
</dbReference>
<dbReference type="UniPathway" id="UPA00148">
    <property type="reaction ID" value="UER00222"/>
</dbReference>
<dbReference type="UniPathway" id="UPA00262">
    <property type="reaction ID" value="UER00211"/>
</dbReference>
<dbReference type="UniPathway" id="UPA00262">
    <property type="reaction ID" value="UER00222"/>
</dbReference>
<dbReference type="UniPathway" id="UPA00262">
    <property type="reaction ID" value="UER00376"/>
</dbReference>
<dbReference type="Proteomes" id="UP000000265">
    <property type="component" value="Chromosome"/>
</dbReference>
<dbReference type="GO" id="GO:0051287">
    <property type="term" value="F:NAD binding"/>
    <property type="evidence" value="ECO:0007669"/>
    <property type="project" value="InterPro"/>
</dbReference>
<dbReference type="GO" id="GO:0043115">
    <property type="term" value="F:precorrin-2 dehydrogenase activity"/>
    <property type="evidence" value="ECO:0007669"/>
    <property type="project" value="UniProtKB-UniRule"/>
</dbReference>
<dbReference type="GO" id="GO:0051266">
    <property type="term" value="F:sirohydrochlorin ferrochelatase activity"/>
    <property type="evidence" value="ECO:0007669"/>
    <property type="project" value="UniProtKB-EC"/>
</dbReference>
<dbReference type="GO" id="GO:0004851">
    <property type="term" value="F:uroporphyrin-III C-methyltransferase activity"/>
    <property type="evidence" value="ECO:0007669"/>
    <property type="project" value="UniProtKB-UniRule"/>
</dbReference>
<dbReference type="GO" id="GO:0009236">
    <property type="term" value="P:cobalamin biosynthetic process"/>
    <property type="evidence" value="ECO:0007669"/>
    <property type="project" value="UniProtKB-UniRule"/>
</dbReference>
<dbReference type="GO" id="GO:0032259">
    <property type="term" value="P:methylation"/>
    <property type="evidence" value="ECO:0007669"/>
    <property type="project" value="UniProtKB-KW"/>
</dbReference>
<dbReference type="GO" id="GO:0019354">
    <property type="term" value="P:siroheme biosynthetic process"/>
    <property type="evidence" value="ECO:0007669"/>
    <property type="project" value="UniProtKB-UniRule"/>
</dbReference>
<dbReference type="CDD" id="cd11642">
    <property type="entry name" value="SUMT"/>
    <property type="match status" value="1"/>
</dbReference>
<dbReference type="FunFam" id="1.10.8.210:FF:000001">
    <property type="entry name" value="Siroheme synthase"/>
    <property type="match status" value="1"/>
</dbReference>
<dbReference type="FunFam" id="3.30.160.110:FF:000001">
    <property type="entry name" value="Siroheme synthase"/>
    <property type="match status" value="1"/>
</dbReference>
<dbReference type="FunFam" id="3.30.950.10:FF:000001">
    <property type="entry name" value="Siroheme synthase"/>
    <property type="match status" value="1"/>
</dbReference>
<dbReference type="FunFam" id="3.40.1010.10:FF:000001">
    <property type="entry name" value="Siroheme synthase"/>
    <property type="match status" value="1"/>
</dbReference>
<dbReference type="FunFam" id="3.40.50.720:FF:000092">
    <property type="entry name" value="Siroheme synthase"/>
    <property type="match status" value="1"/>
</dbReference>
<dbReference type="Gene3D" id="3.40.1010.10">
    <property type="entry name" value="Cobalt-precorrin-4 Transmethylase, Domain 1"/>
    <property type="match status" value="1"/>
</dbReference>
<dbReference type="Gene3D" id="3.30.950.10">
    <property type="entry name" value="Methyltransferase, Cobalt-precorrin-4 Transmethylase, Domain 2"/>
    <property type="match status" value="1"/>
</dbReference>
<dbReference type="Gene3D" id="3.40.50.720">
    <property type="entry name" value="NAD(P)-binding Rossmann-like Domain"/>
    <property type="match status" value="1"/>
</dbReference>
<dbReference type="Gene3D" id="1.10.8.210">
    <property type="entry name" value="Sirohaem synthase, dimerisation domain"/>
    <property type="match status" value="1"/>
</dbReference>
<dbReference type="Gene3D" id="3.30.160.110">
    <property type="entry name" value="Siroheme synthase, domain 2"/>
    <property type="match status" value="1"/>
</dbReference>
<dbReference type="HAMAP" id="MF_01646">
    <property type="entry name" value="Siroheme_synth"/>
    <property type="match status" value="1"/>
</dbReference>
<dbReference type="InterPro" id="IPR000878">
    <property type="entry name" value="4pyrrol_Mease"/>
</dbReference>
<dbReference type="InterPro" id="IPR035996">
    <property type="entry name" value="4pyrrol_Methylase_sf"/>
</dbReference>
<dbReference type="InterPro" id="IPR014777">
    <property type="entry name" value="4pyrrole_Mease_sub1"/>
</dbReference>
<dbReference type="InterPro" id="IPR014776">
    <property type="entry name" value="4pyrrole_Mease_sub2"/>
</dbReference>
<dbReference type="InterPro" id="IPR006366">
    <property type="entry name" value="CobA/CysG_C"/>
</dbReference>
<dbReference type="InterPro" id="IPR036291">
    <property type="entry name" value="NAD(P)-bd_dom_sf"/>
</dbReference>
<dbReference type="InterPro" id="IPR050161">
    <property type="entry name" value="Siro_Cobalamin_biosynth"/>
</dbReference>
<dbReference type="InterPro" id="IPR037115">
    <property type="entry name" value="Sirohaem_synt_dimer_dom_sf"/>
</dbReference>
<dbReference type="InterPro" id="IPR012409">
    <property type="entry name" value="Sirohaem_synth"/>
</dbReference>
<dbReference type="InterPro" id="IPR028281">
    <property type="entry name" value="Sirohaem_synthase_central"/>
</dbReference>
<dbReference type="InterPro" id="IPR019478">
    <property type="entry name" value="Sirohaem_synthase_dimer_dom"/>
</dbReference>
<dbReference type="InterPro" id="IPR006367">
    <property type="entry name" value="Sirohaem_synthase_N"/>
</dbReference>
<dbReference type="InterPro" id="IPR003043">
    <property type="entry name" value="Uropor_MeTrfase_CS"/>
</dbReference>
<dbReference type="NCBIfam" id="TIGR01469">
    <property type="entry name" value="cobA_cysG_Cterm"/>
    <property type="match status" value="1"/>
</dbReference>
<dbReference type="NCBIfam" id="TIGR01470">
    <property type="entry name" value="cysG_Nterm"/>
    <property type="match status" value="1"/>
</dbReference>
<dbReference type="NCBIfam" id="NF004790">
    <property type="entry name" value="PRK06136.1"/>
    <property type="match status" value="1"/>
</dbReference>
<dbReference type="NCBIfam" id="NF007922">
    <property type="entry name" value="PRK10637.1"/>
    <property type="match status" value="1"/>
</dbReference>
<dbReference type="PANTHER" id="PTHR45790:SF1">
    <property type="entry name" value="SIROHEME SYNTHASE"/>
    <property type="match status" value="1"/>
</dbReference>
<dbReference type="PANTHER" id="PTHR45790">
    <property type="entry name" value="SIROHEME SYNTHASE-RELATED"/>
    <property type="match status" value="1"/>
</dbReference>
<dbReference type="Pfam" id="PF10414">
    <property type="entry name" value="CysG_dimeriser"/>
    <property type="match status" value="1"/>
</dbReference>
<dbReference type="Pfam" id="PF13241">
    <property type="entry name" value="NAD_binding_7"/>
    <property type="match status" value="1"/>
</dbReference>
<dbReference type="Pfam" id="PF14824">
    <property type="entry name" value="Sirohm_synth_M"/>
    <property type="match status" value="1"/>
</dbReference>
<dbReference type="Pfam" id="PF00590">
    <property type="entry name" value="TP_methylase"/>
    <property type="match status" value="1"/>
</dbReference>
<dbReference type="PIRSF" id="PIRSF036426">
    <property type="entry name" value="Sirohaem_synth"/>
    <property type="match status" value="1"/>
</dbReference>
<dbReference type="SUPFAM" id="SSF51735">
    <property type="entry name" value="NAD(P)-binding Rossmann-fold domains"/>
    <property type="match status" value="1"/>
</dbReference>
<dbReference type="SUPFAM" id="SSF75615">
    <property type="entry name" value="Siroheme synthase middle domains-like"/>
    <property type="match status" value="1"/>
</dbReference>
<dbReference type="SUPFAM" id="SSF53790">
    <property type="entry name" value="Tetrapyrrole methylase"/>
    <property type="match status" value="1"/>
</dbReference>
<dbReference type="PROSITE" id="PS00839">
    <property type="entry name" value="SUMT_1"/>
    <property type="match status" value="1"/>
</dbReference>
<dbReference type="PROSITE" id="PS00840">
    <property type="entry name" value="SUMT_2"/>
    <property type="match status" value="1"/>
</dbReference>
<name>CYSG2_KLEP7</name>
<accession>A6TF07</accession>
<gene>
    <name evidence="1" type="primary">cysG2</name>
    <name type="ordered locus">KPN78578_37170</name>
    <name type="ORF">KPN_03754</name>
</gene>
<sequence>MDHLPIFCQLRQRDCLLVGGGDVAERKARLLLDAGANVTVNALDFTPQFQVWADSQMLTLVQGEFIPSLLDNCWLAIAATDDETVNQQVSEAAEARRIFCNVVDAPRQASFIMPSIIDRSPLMVAVSSGGTSPVLARLLREKLESILPLHLGQLARYAGHLRARVKQQFATVGERRRFWEKLFVNDRLAQSLANDDRQAVADTTEQLLTEPLEHRGEVVLVGAGPGDAGLLTLKGLQQIQQADVVVYDRLVSDDIMNLVRRDADRVFVGKRSGYHCVPQEEINQILLREAQKGRRVVRLKGGDPFIFGRGGEELETLCEAGIPFSVVPGITAASGCSAYSGIPLTHRDFAQGVRLVTGHLKTGGELDWANLAVEKQTLVFYMGLNQAPAIREKLIAHGMAEDMPAAIVENGTAVTQKVVSGTLGQLDILAQQMASPALIIVGRVVGLRDKLNWFSNH</sequence>
<proteinExistence type="inferred from homology"/>